<organism>
    <name type="scientific">Paraburkholderia phytofirmans (strain DSM 17436 / LMG 22146 / PsJN)</name>
    <name type="common">Burkholderia phytofirmans</name>
    <dbReference type="NCBI Taxonomy" id="398527"/>
    <lineage>
        <taxon>Bacteria</taxon>
        <taxon>Pseudomonadati</taxon>
        <taxon>Pseudomonadota</taxon>
        <taxon>Betaproteobacteria</taxon>
        <taxon>Burkholderiales</taxon>
        <taxon>Burkholderiaceae</taxon>
        <taxon>Paraburkholderia</taxon>
    </lineage>
</organism>
<name>Y1827_PARPJ</name>
<proteinExistence type="inferred from homology"/>
<gene>
    <name type="ordered locus">Bphyt_1827</name>
</gene>
<evidence type="ECO:0000255" key="1">
    <source>
        <dbReference type="HAMAP-Rule" id="MF_00274"/>
    </source>
</evidence>
<evidence type="ECO:0000256" key="2">
    <source>
        <dbReference type="SAM" id="MobiDB-lite"/>
    </source>
</evidence>
<reference key="1">
    <citation type="journal article" date="2011" name="J. Bacteriol.">
        <title>Complete genome sequence of the plant growth-promoting endophyte Burkholderia phytofirmans strain PsJN.</title>
        <authorList>
            <person name="Weilharter A."/>
            <person name="Mitter B."/>
            <person name="Shin M.V."/>
            <person name="Chain P.S."/>
            <person name="Nowak J."/>
            <person name="Sessitsch A."/>
        </authorList>
    </citation>
    <scope>NUCLEOTIDE SEQUENCE [LARGE SCALE GENOMIC DNA]</scope>
    <source>
        <strain>DSM 17436 / LMG 22146 / PsJN</strain>
    </source>
</reference>
<accession>B2T3S4</accession>
<sequence>MMKGQLAGLMKQAQQMQENMKKMQEQLALIEVEGQSGAGLVKVTMTCKNDVRRVSIDPSLLADDKDMLEDLVAAAFNDAVRKAEATAQEKMGGMTSGLPLPPGFKLPF</sequence>
<dbReference type="EMBL" id="CP001052">
    <property type="protein sequence ID" value="ACD16235.1"/>
    <property type="molecule type" value="Genomic_DNA"/>
</dbReference>
<dbReference type="RefSeq" id="WP_007182071.1">
    <property type="nucleotide sequence ID" value="NC_010681.1"/>
</dbReference>
<dbReference type="SMR" id="B2T3S4"/>
<dbReference type="STRING" id="398527.Bphyt_1827"/>
<dbReference type="KEGG" id="bpy:Bphyt_1827"/>
<dbReference type="eggNOG" id="COG0718">
    <property type="taxonomic scope" value="Bacteria"/>
</dbReference>
<dbReference type="HOGENOM" id="CLU_140930_0_0_4"/>
<dbReference type="OrthoDB" id="9808738at2"/>
<dbReference type="Proteomes" id="UP000001739">
    <property type="component" value="Chromosome 1"/>
</dbReference>
<dbReference type="GO" id="GO:0043590">
    <property type="term" value="C:bacterial nucleoid"/>
    <property type="evidence" value="ECO:0007669"/>
    <property type="project" value="UniProtKB-UniRule"/>
</dbReference>
<dbReference type="GO" id="GO:0005829">
    <property type="term" value="C:cytosol"/>
    <property type="evidence" value="ECO:0007669"/>
    <property type="project" value="TreeGrafter"/>
</dbReference>
<dbReference type="GO" id="GO:0003677">
    <property type="term" value="F:DNA binding"/>
    <property type="evidence" value="ECO:0007669"/>
    <property type="project" value="UniProtKB-UniRule"/>
</dbReference>
<dbReference type="FunFam" id="3.30.1310.10:FF:000001">
    <property type="entry name" value="Nucleoid-associated protein YbaB"/>
    <property type="match status" value="1"/>
</dbReference>
<dbReference type="Gene3D" id="3.30.1310.10">
    <property type="entry name" value="Nucleoid-associated protein YbaB-like domain"/>
    <property type="match status" value="1"/>
</dbReference>
<dbReference type="HAMAP" id="MF_00274">
    <property type="entry name" value="DNA_YbaB_EbfC"/>
    <property type="match status" value="1"/>
</dbReference>
<dbReference type="InterPro" id="IPR036894">
    <property type="entry name" value="YbaB-like_sf"/>
</dbReference>
<dbReference type="InterPro" id="IPR004401">
    <property type="entry name" value="YbaB/EbfC"/>
</dbReference>
<dbReference type="NCBIfam" id="TIGR00103">
    <property type="entry name" value="DNA_YbaB_EbfC"/>
    <property type="match status" value="1"/>
</dbReference>
<dbReference type="PANTHER" id="PTHR33449">
    <property type="entry name" value="NUCLEOID-ASSOCIATED PROTEIN YBAB"/>
    <property type="match status" value="1"/>
</dbReference>
<dbReference type="PANTHER" id="PTHR33449:SF1">
    <property type="entry name" value="NUCLEOID-ASSOCIATED PROTEIN YBAB"/>
    <property type="match status" value="1"/>
</dbReference>
<dbReference type="Pfam" id="PF02575">
    <property type="entry name" value="YbaB_DNA_bd"/>
    <property type="match status" value="1"/>
</dbReference>
<dbReference type="PIRSF" id="PIRSF004555">
    <property type="entry name" value="UCP004555"/>
    <property type="match status" value="1"/>
</dbReference>
<dbReference type="SUPFAM" id="SSF82607">
    <property type="entry name" value="YbaB-like"/>
    <property type="match status" value="1"/>
</dbReference>
<feature type="chain" id="PRO_1000114594" description="Nucleoid-associated protein Bphyt_1827">
    <location>
        <begin position="1"/>
        <end position="108"/>
    </location>
</feature>
<feature type="region of interest" description="Disordered" evidence="2">
    <location>
        <begin position="87"/>
        <end position="108"/>
    </location>
</feature>
<feature type="compositionally biased region" description="Pro residues" evidence="2">
    <location>
        <begin position="99"/>
        <end position="108"/>
    </location>
</feature>
<keyword id="KW-0963">Cytoplasm</keyword>
<keyword id="KW-0238">DNA-binding</keyword>
<comment type="function">
    <text evidence="1">Binds to DNA and alters its conformation. May be involved in regulation of gene expression, nucleoid organization and DNA protection.</text>
</comment>
<comment type="subunit">
    <text evidence="1">Homodimer.</text>
</comment>
<comment type="subcellular location">
    <subcellularLocation>
        <location evidence="1">Cytoplasm</location>
        <location evidence="1">Nucleoid</location>
    </subcellularLocation>
</comment>
<comment type="similarity">
    <text evidence="1">Belongs to the YbaB/EbfC family.</text>
</comment>
<protein>
    <recommendedName>
        <fullName evidence="1">Nucleoid-associated protein Bphyt_1827</fullName>
    </recommendedName>
</protein>